<gene>
    <name evidence="7" type="primary">BBX25</name>
    <name type="synonym">STH</name>
    <name type="synonym">STH1</name>
    <name type="ordered locus">At2g31380</name>
    <name type="ORF">T28P16.13</name>
</gene>
<evidence type="ECO:0000255" key="1">
    <source>
        <dbReference type="PROSITE-ProRule" id="PRU00024"/>
    </source>
</evidence>
<evidence type="ECO:0000256" key="2">
    <source>
        <dbReference type="SAM" id="MobiDB-lite"/>
    </source>
</evidence>
<evidence type="ECO:0000269" key="3">
    <source>
    </source>
</evidence>
<evidence type="ECO:0000269" key="4">
    <source>
    </source>
</evidence>
<evidence type="ECO:0000269" key="5">
    <source>
    </source>
</evidence>
<evidence type="ECO:0000269" key="6">
    <source>
    </source>
</evidence>
<evidence type="ECO:0000303" key="7">
    <source>
    </source>
</evidence>
<protein>
    <recommendedName>
        <fullName evidence="7">B-box zinc finger protein 25</fullName>
    </recommendedName>
    <alternativeName>
        <fullName>Protein SALT TOLERANCE HOMOLOG 1</fullName>
    </alternativeName>
    <alternativeName>
        <fullName>Salt tolerance-like protein</fullName>
    </alternativeName>
</protein>
<sequence length="238" mass="26657">MKIQCDVCEKAPATLICCADEAALCAKCDVEVHAANKLASKHQRLFLDSLSTKFPPCDICLEKAAFIFCVEDRALLCRDCDEATHAPNTRSANHQRFLATGIRVALSSTSCNQEVEKNHFDPSNQQSLSKPPTQQPAAPSPLWATDEFFSYSDLDCSNKEKEQLDLGELDWLAEMGLFGDQPDQEALPVAEVPELSFSHLAHAHSYNRPMKSNVPNKKQRLEYRYDDEEEHFLVPDLG</sequence>
<accession>Q9SID1</accession>
<accession>Q9C558</accession>
<keyword id="KW-0479">Metal-binding</keyword>
<keyword id="KW-0539">Nucleus</keyword>
<keyword id="KW-1185">Reference proteome</keyword>
<keyword id="KW-0677">Repeat</keyword>
<keyword id="KW-0678">Repressor</keyword>
<keyword id="KW-0804">Transcription</keyword>
<keyword id="KW-0805">Transcription regulation</keyword>
<keyword id="KW-0832">Ubl conjugation</keyword>
<keyword id="KW-0862">Zinc</keyword>
<keyword id="KW-0863">Zinc-finger</keyword>
<reference key="1">
    <citation type="journal article" date="2001" name="EMBO J.">
        <title>Identification of a structural motif that confers specific interaction with the WD40 repeat domain of Arabidopsis COP1.</title>
        <authorList>
            <person name="Holm M."/>
            <person name="Hardtke C.S."/>
            <person name="Gaudet R."/>
            <person name="Deng X.-W."/>
        </authorList>
    </citation>
    <scope>NUCLEOTIDE SEQUENCE [MRNA]</scope>
    <scope>INTERACTION WITH COP1</scope>
    <scope>MUTAGENESIS OF 234-VAL-PRO-235</scope>
    <source>
        <tissue>Etiolated seedling</tissue>
    </source>
</reference>
<reference key="2">
    <citation type="journal article" date="1999" name="Nature">
        <title>Sequence and analysis of chromosome 2 of the plant Arabidopsis thaliana.</title>
        <authorList>
            <person name="Lin X."/>
            <person name="Kaul S."/>
            <person name="Rounsley S.D."/>
            <person name="Shea T.P."/>
            <person name="Benito M.-I."/>
            <person name="Town C.D."/>
            <person name="Fujii C.Y."/>
            <person name="Mason T.M."/>
            <person name="Bowman C.L."/>
            <person name="Barnstead M.E."/>
            <person name="Feldblyum T.V."/>
            <person name="Buell C.R."/>
            <person name="Ketchum K.A."/>
            <person name="Lee J.J."/>
            <person name="Ronning C.M."/>
            <person name="Koo H.L."/>
            <person name="Moffat K.S."/>
            <person name="Cronin L.A."/>
            <person name="Shen M."/>
            <person name="Pai G."/>
            <person name="Van Aken S."/>
            <person name="Umayam L."/>
            <person name="Tallon L.J."/>
            <person name="Gill J.E."/>
            <person name="Adams M.D."/>
            <person name="Carrera A.J."/>
            <person name="Creasy T.H."/>
            <person name="Goodman H.M."/>
            <person name="Somerville C.R."/>
            <person name="Copenhaver G.P."/>
            <person name="Preuss D."/>
            <person name="Nierman W.C."/>
            <person name="White O."/>
            <person name="Eisen J.A."/>
            <person name="Salzberg S.L."/>
            <person name="Fraser C.M."/>
            <person name="Venter J.C."/>
        </authorList>
    </citation>
    <scope>NUCLEOTIDE SEQUENCE [LARGE SCALE GENOMIC DNA]</scope>
    <source>
        <strain>cv. Columbia</strain>
    </source>
</reference>
<reference key="3">
    <citation type="journal article" date="2017" name="Plant J.">
        <title>Araport11: a complete reannotation of the Arabidopsis thaliana reference genome.</title>
        <authorList>
            <person name="Cheng C.Y."/>
            <person name="Krishnakumar V."/>
            <person name="Chan A.P."/>
            <person name="Thibaud-Nissen F."/>
            <person name="Schobel S."/>
            <person name="Town C.D."/>
        </authorList>
    </citation>
    <scope>GENOME REANNOTATION</scope>
    <source>
        <strain>cv. Columbia</strain>
    </source>
</reference>
<reference key="4">
    <citation type="journal article" date="2003" name="Science">
        <title>Empirical analysis of transcriptional activity in the Arabidopsis genome.</title>
        <authorList>
            <person name="Yamada K."/>
            <person name="Lim J."/>
            <person name="Dale J.M."/>
            <person name="Chen H."/>
            <person name="Shinn P."/>
            <person name="Palm C.J."/>
            <person name="Southwick A.M."/>
            <person name="Wu H.C."/>
            <person name="Kim C.J."/>
            <person name="Nguyen M."/>
            <person name="Pham P.K."/>
            <person name="Cheuk R.F."/>
            <person name="Karlin-Newmann G."/>
            <person name="Liu S.X."/>
            <person name="Lam B."/>
            <person name="Sakano H."/>
            <person name="Wu T."/>
            <person name="Yu G."/>
            <person name="Miranda M."/>
            <person name="Quach H.L."/>
            <person name="Tripp M."/>
            <person name="Chang C.H."/>
            <person name="Lee J.M."/>
            <person name="Toriumi M.J."/>
            <person name="Chan M.M."/>
            <person name="Tang C.C."/>
            <person name="Onodera C.S."/>
            <person name="Deng J.M."/>
            <person name="Akiyama K."/>
            <person name="Ansari Y."/>
            <person name="Arakawa T."/>
            <person name="Banh J."/>
            <person name="Banno F."/>
            <person name="Bowser L."/>
            <person name="Brooks S.Y."/>
            <person name="Carninci P."/>
            <person name="Chao Q."/>
            <person name="Choy N."/>
            <person name="Enju A."/>
            <person name="Goldsmith A.D."/>
            <person name="Gurjal M."/>
            <person name="Hansen N.F."/>
            <person name="Hayashizaki Y."/>
            <person name="Johnson-Hopson C."/>
            <person name="Hsuan V.W."/>
            <person name="Iida K."/>
            <person name="Karnes M."/>
            <person name="Khan S."/>
            <person name="Koesema E."/>
            <person name="Ishida J."/>
            <person name="Jiang P.X."/>
            <person name="Jones T."/>
            <person name="Kawai J."/>
            <person name="Kamiya A."/>
            <person name="Meyers C."/>
            <person name="Nakajima M."/>
            <person name="Narusaka M."/>
            <person name="Seki M."/>
            <person name="Sakurai T."/>
            <person name="Satou M."/>
            <person name="Tamse R."/>
            <person name="Vaysberg M."/>
            <person name="Wallender E.K."/>
            <person name="Wong C."/>
            <person name="Yamamura Y."/>
            <person name="Yuan S."/>
            <person name="Shinozaki K."/>
            <person name="Davis R.W."/>
            <person name="Theologis A."/>
            <person name="Ecker J.R."/>
        </authorList>
    </citation>
    <scope>NUCLEOTIDE SEQUENCE [LARGE SCALE MRNA]</scope>
    <source>
        <strain>cv. Columbia</strain>
    </source>
</reference>
<reference key="5">
    <citation type="journal article" date="2008" name="Biosci. Biotechnol. Biochem.">
        <title>The common function of a novel subfamily of B-Box zinc finger proteins with reference to circadian-associated events in Arabidopsis thaliana.</title>
        <authorList>
            <person name="Kumagai T."/>
            <person name="Ito S."/>
            <person name="Nakamichi N."/>
            <person name="Niwa Y."/>
            <person name="Murakami M."/>
            <person name="Yamashino T."/>
            <person name="Mizuno T."/>
        </authorList>
    </citation>
    <scope>FUNCTION</scope>
</reference>
<reference key="6">
    <citation type="journal article" date="2009" name="Plant Cell">
        <title>The Arabidopsis B-box zinc finger family.</title>
        <authorList>
            <person name="Khanna R."/>
            <person name="Kronmiller B."/>
            <person name="Maszle D.R."/>
            <person name="Coupland G."/>
            <person name="Holm M."/>
            <person name="Mizuno T."/>
            <person name="Wu S.H."/>
        </authorList>
    </citation>
    <scope>GENE FAMILY</scope>
    <scope>NOMENCLATURE</scope>
</reference>
<reference key="7">
    <citation type="journal article" date="2013" name="Plant Cell">
        <title>The Arabidopsis B-BOX protein BBX25 interacts with HY5, negatively regulating BBX22 expression to suppress seedling photomorphogenesis.</title>
        <authorList>
            <person name="Gangappa S.N."/>
            <person name="Crocco C.D."/>
            <person name="Johansson H."/>
            <person name="Datta S."/>
            <person name="Hettiarachchi C."/>
            <person name="Holm M."/>
            <person name="Botto J.F."/>
        </authorList>
    </citation>
    <scope>FUNCTION</scope>
    <scope>INTERACTION WITH HY5</scope>
    <scope>SUBCELLULAR LOCATION</scope>
    <scope>DEGRADATION BY THE PROTEASOME</scope>
    <scope>DISRUPTION PHENOTYPE</scope>
    <scope>MUTAGENESIS OF ASP-20 AND ASP-72</scope>
</reference>
<reference key="8">
    <citation type="journal article" date="2013" name="Plant Signal. Behav.">
        <title>Molecular interactions of BBX24 and BBX25 with HYH, HY5 HOMOLOG, to modulate Arabidopsis seedling development.</title>
        <authorList>
            <person name="Gangappa S.N."/>
            <person name="Holm M."/>
            <person name="Botto J.F."/>
        </authorList>
    </citation>
    <scope>INTERACTION WITH HYH</scope>
</reference>
<proteinExistence type="evidence at protein level"/>
<comment type="function">
    <text evidence="4 5">Acts as a negative regulator of seedling photomorphogenesis (PubMed:18540109). BBX25/STH and BBX24/STO function as transcriptional corepressors of HY5 activity, leading to the down-regulation of BBX22 expression. BBX25/STH acts additively with BBX24/STO during de-etiolation and the hypocotyl shade avoidance response (PubMed:23624715).</text>
</comment>
<comment type="subunit">
    <text evidence="3 5 6">Interacts with COP1 WD40 domain (PubMed:11226162). Interacts with HY5 (PubMed:23624715) and HYH (PubMed:23733077).</text>
</comment>
<comment type="interaction">
    <interactant intactId="EBI-631960">
        <id>Q9SID1</id>
    </interactant>
    <interactant intactId="EBI-301649">
        <id>P43254</id>
        <label>COP1</label>
    </interactant>
    <organismsDiffer>false</organismsDiffer>
    <experiments>3</experiments>
</comment>
<comment type="interaction">
    <interactant intactId="EBI-631960">
        <id>Q9SID1</id>
    </interactant>
    <interactant intactId="EBI-301660">
        <id>O24646</id>
        <label>HY5</label>
    </interactant>
    <organismsDiffer>false</organismsDiffer>
    <experiments>3</experiments>
</comment>
<comment type="subcellular location">
    <subcellularLocation>
        <location evidence="5">Nucleus</location>
    </subcellularLocation>
</comment>
<comment type="PTM">
    <text evidence="5">COP1-mediated ubiquitination and subsequent proteasomal degradation of BBX25/STH occurs in the dark.</text>
</comment>
<comment type="disruption phenotype">
    <text evidence="5">Reduced length of hypocotyls.</text>
</comment>
<feature type="chain" id="PRO_0000113296" description="B-box zinc finger protein 25">
    <location>
        <begin position="1"/>
        <end position="238"/>
    </location>
</feature>
<feature type="zinc finger region" description="B box-type 1; atypical" evidence="1">
    <location>
        <begin position="5"/>
        <end position="47"/>
    </location>
</feature>
<feature type="zinc finger region" description="B box-type 2; atypical" evidence="1">
    <location>
        <begin position="57"/>
        <end position="99"/>
    </location>
</feature>
<feature type="region of interest" description="Disordered" evidence="2">
    <location>
        <begin position="115"/>
        <end position="139"/>
    </location>
</feature>
<feature type="region of interest" description="Interaction with COP1" evidence="3">
    <location>
        <begin position="226"/>
        <end position="238"/>
    </location>
</feature>
<feature type="compositionally biased region" description="Polar residues" evidence="2">
    <location>
        <begin position="121"/>
        <end position="137"/>
    </location>
</feature>
<feature type="binding site" evidence="1">
    <location>
        <position position="5"/>
    </location>
    <ligand>
        <name>Zn(2+)</name>
        <dbReference type="ChEBI" id="CHEBI:29105"/>
        <label>1</label>
    </ligand>
</feature>
<feature type="binding site" evidence="1">
    <location>
        <position position="8"/>
    </location>
    <ligand>
        <name>Zn(2+)</name>
        <dbReference type="ChEBI" id="CHEBI:29105"/>
        <label>1</label>
    </ligand>
</feature>
<feature type="binding site" evidence="1">
    <location>
        <position position="28"/>
    </location>
    <ligand>
        <name>Zn(2+)</name>
        <dbReference type="ChEBI" id="CHEBI:29105"/>
        <label>1</label>
    </ligand>
</feature>
<feature type="binding site" evidence="1">
    <location>
        <position position="33"/>
    </location>
    <ligand>
        <name>Zn(2+)</name>
        <dbReference type="ChEBI" id="CHEBI:29105"/>
        <label>1</label>
    </ligand>
</feature>
<feature type="binding site" evidence="1">
    <location>
        <position position="57"/>
    </location>
    <ligand>
        <name>Zn(2+)</name>
        <dbReference type="ChEBI" id="CHEBI:29105"/>
        <label>2</label>
    </ligand>
</feature>
<feature type="binding site" evidence="1">
    <location>
        <position position="60"/>
    </location>
    <ligand>
        <name>Zn(2+)</name>
        <dbReference type="ChEBI" id="CHEBI:29105"/>
        <label>2</label>
    </ligand>
</feature>
<feature type="binding site" evidence="1">
    <location>
        <position position="80"/>
    </location>
    <ligand>
        <name>Zn(2+)</name>
        <dbReference type="ChEBI" id="CHEBI:29105"/>
        <label>2</label>
    </ligand>
</feature>
<feature type="binding site" evidence="1">
    <location>
        <position position="85"/>
    </location>
    <ligand>
        <name>Zn(2+)</name>
        <dbReference type="ChEBI" id="CHEBI:29105"/>
        <label>2</label>
    </ligand>
</feature>
<feature type="mutagenesis site" description="Abolishes interaction with HY5." evidence="5">
    <original>D</original>
    <variation>A</variation>
    <location>
        <position position="20"/>
    </location>
</feature>
<feature type="mutagenesis site" description="Abolishes interaction with HY5." evidence="5">
    <original>D</original>
    <variation>A</variation>
    <location>
        <position position="72"/>
    </location>
</feature>
<feature type="mutagenesis site" description="Abolishes interaction with COP1." evidence="3">
    <original>VP</original>
    <variation>AA</variation>
    <location>
        <begin position="234"/>
        <end position="235"/>
    </location>
</feature>
<organism>
    <name type="scientific">Arabidopsis thaliana</name>
    <name type="common">Mouse-ear cress</name>
    <dbReference type="NCBI Taxonomy" id="3702"/>
    <lineage>
        <taxon>Eukaryota</taxon>
        <taxon>Viridiplantae</taxon>
        <taxon>Streptophyta</taxon>
        <taxon>Embryophyta</taxon>
        <taxon>Tracheophyta</taxon>
        <taxon>Spermatophyta</taxon>
        <taxon>Magnoliopsida</taxon>
        <taxon>eudicotyledons</taxon>
        <taxon>Gunneridae</taxon>
        <taxon>Pentapetalae</taxon>
        <taxon>rosids</taxon>
        <taxon>malvids</taxon>
        <taxon>Brassicales</taxon>
        <taxon>Brassicaceae</taxon>
        <taxon>Camelineae</taxon>
        <taxon>Arabidopsis</taxon>
    </lineage>
</organism>
<name>BBX25_ARATH</name>
<dbReference type="EMBL" id="AF323666">
    <property type="protein sequence ID" value="AAK01658.1"/>
    <property type="molecule type" value="mRNA"/>
</dbReference>
<dbReference type="EMBL" id="AC007169">
    <property type="protein sequence ID" value="AAD26481.2"/>
    <property type="molecule type" value="Genomic_DNA"/>
</dbReference>
<dbReference type="EMBL" id="CP002685">
    <property type="protein sequence ID" value="AEC08540.1"/>
    <property type="molecule type" value="Genomic_DNA"/>
</dbReference>
<dbReference type="EMBL" id="AF325077">
    <property type="protein sequence ID" value="AAK17145.1"/>
    <property type="molecule type" value="mRNA"/>
</dbReference>
<dbReference type="EMBL" id="AF370311">
    <property type="protein sequence ID" value="AAK44126.1"/>
    <property type="molecule type" value="mRNA"/>
</dbReference>
<dbReference type="EMBL" id="AY063097">
    <property type="protein sequence ID" value="AAL34271.1"/>
    <property type="molecule type" value="mRNA"/>
</dbReference>
<dbReference type="PIR" id="A84720">
    <property type="entry name" value="A84720"/>
</dbReference>
<dbReference type="RefSeq" id="NP_565722.1">
    <property type="nucleotide sequence ID" value="NM_128695.4"/>
</dbReference>
<dbReference type="SMR" id="Q9SID1"/>
<dbReference type="BioGRID" id="3043">
    <property type="interactions" value="8"/>
</dbReference>
<dbReference type="FunCoup" id="Q9SID1">
    <property type="interactions" value="249"/>
</dbReference>
<dbReference type="IntAct" id="Q9SID1">
    <property type="interactions" value="8"/>
</dbReference>
<dbReference type="MINT" id="Q9SID1"/>
<dbReference type="STRING" id="3702.Q9SID1"/>
<dbReference type="PaxDb" id="3702-AT2G31380.1"/>
<dbReference type="EnsemblPlants" id="AT2G31380.1">
    <property type="protein sequence ID" value="AT2G31380.1"/>
    <property type="gene ID" value="AT2G31380"/>
</dbReference>
<dbReference type="GeneID" id="817696"/>
<dbReference type="Gramene" id="AT2G31380.1">
    <property type="protein sequence ID" value="AT2G31380.1"/>
    <property type="gene ID" value="AT2G31380"/>
</dbReference>
<dbReference type="KEGG" id="ath:AT2G31380"/>
<dbReference type="Araport" id="AT2G31380"/>
<dbReference type="TAIR" id="AT2G31380">
    <property type="gene designation" value="STH"/>
</dbReference>
<dbReference type="eggNOG" id="ENOG502QQIU">
    <property type="taxonomic scope" value="Eukaryota"/>
</dbReference>
<dbReference type="HOGENOM" id="CLU_025298_3_0_1"/>
<dbReference type="InParanoid" id="Q9SID1"/>
<dbReference type="OMA" id="YANSPTW"/>
<dbReference type="OrthoDB" id="153872at2759"/>
<dbReference type="PhylomeDB" id="Q9SID1"/>
<dbReference type="PRO" id="PR:Q9SID1"/>
<dbReference type="Proteomes" id="UP000006548">
    <property type="component" value="Chromosome 2"/>
</dbReference>
<dbReference type="ExpressionAtlas" id="Q9SID1">
    <property type="expression patterns" value="baseline and differential"/>
</dbReference>
<dbReference type="GO" id="GO:0005634">
    <property type="term" value="C:nucleus"/>
    <property type="evidence" value="ECO:0007669"/>
    <property type="project" value="UniProtKB-SubCell"/>
</dbReference>
<dbReference type="GO" id="GO:0003700">
    <property type="term" value="F:DNA-binding transcription factor activity"/>
    <property type="evidence" value="ECO:0000250"/>
    <property type="project" value="TAIR"/>
</dbReference>
<dbReference type="GO" id="GO:0008270">
    <property type="term" value="F:zinc ion binding"/>
    <property type="evidence" value="ECO:0007669"/>
    <property type="project" value="UniProtKB-KW"/>
</dbReference>
<dbReference type="GO" id="GO:0010100">
    <property type="term" value="P:negative regulation of photomorphogenesis"/>
    <property type="evidence" value="ECO:0000314"/>
    <property type="project" value="UniProtKB"/>
</dbReference>
<dbReference type="GO" id="GO:0006355">
    <property type="term" value="P:regulation of DNA-templated transcription"/>
    <property type="evidence" value="ECO:0000304"/>
    <property type="project" value="TAIR"/>
</dbReference>
<dbReference type="CDD" id="cd19821">
    <property type="entry name" value="Bbox1_BBX-like"/>
    <property type="match status" value="2"/>
</dbReference>
<dbReference type="Gene3D" id="3.30.160.60">
    <property type="entry name" value="Classic Zinc Finger"/>
    <property type="match status" value="1"/>
</dbReference>
<dbReference type="InterPro" id="IPR051979">
    <property type="entry name" value="B-box_zinc_finger"/>
</dbReference>
<dbReference type="InterPro" id="IPR049808">
    <property type="entry name" value="CONSTANS-like_Bbox1"/>
</dbReference>
<dbReference type="InterPro" id="IPR000315">
    <property type="entry name" value="Znf_B-box"/>
</dbReference>
<dbReference type="PANTHER" id="PTHR31832">
    <property type="entry name" value="B-BOX ZINC FINGER PROTEIN 22"/>
    <property type="match status" value="1"/>
</dbReference>
<dbReference type="PANTHER" id="PTHR31832:SF47">
    <property type="entry name" value="B-BOX ZINC FINGER PROTEIN 25"/>
    <property type="match status" value="1"/>
</dbReference>
<dbReference type="Pfam" id="PF00643">
    <property type="entry name" value="zf-B_box"/>
    <property type="match status" value="2"/>
</dbReference>
<dbReference type="SMART" id="SM00336">
    <property type="entry name" value="BBOX"/>
    <property type="match status" value="2"/>
</dbReference>
<dbReference type="PROSITE" id="PS50119">
    <property type="entry name" value="ZF_BBOX"/>
    <property type="match status" value="2"/>
</dbReference>